<sequence length="137" mass="15217">MKLNLYVLTPKRIIWDCEVKEIILSTNSGQIGVLPNHAPINTAVDMGPLRIRLLNDQWLTAVLWSGFARIVNNEIIILGNDAELGSDIDPNEAQQALEIAEANLSKAEGTKELVEAKLALRRARIRIEAVNWIPPSN</sequence>
<proteinExistence type="inferred from homology"/>
<reference key="1">
    <citation type="journal article" date="2007" name="Theor. Appl. Genet.">
        <title>Complete chloroplast genome sequences of Hordeum vulgare, Sorghum bicolor and Agrostis stolonifera, and comparative analyses with other grass genomes.</title>
        <authorList>
            <person name="Saski C."/>
            <person name="Lee S.-B."/>
            <person name="Fjellheim S."/>
            <person name="Guda C."/>
            <person name="Jansen R.K."/>
            <person name="Luo H."/>
            <person name="Tomkins J."/>
            <person name="Rognli O.A."/>
            <person name="Daniell H."/>
            <person name="Clarke J.L."/>
        </authorList>
    </citation>
    <scope>NUCLEOTIDE SEQUENCE [LARGE SCALE GENOMIC DNA]</scope>
    <source>
        <strain>cv. Penn A-4</strain>
    </source>
</reference>
<evidence type="ECO:0000255" key="1">
    <source>
        <dbReference type="HAMAP-Rule" id="MF_00530"/>
    </source>
</evidence>
<name>ATPE_AGRST</name>
<organism>
    <name type="scientific">Agrostis stolonifera</name>
    <name type="common">Creeping bentgrass</name>
    <dbReference type="NCBI Taxonomy" id="63632"/>
    <lineage>
        <taxon>Eukaryota</taxon>
        <taxon>Viridiplantae</taxon>
        <taxon>Streptophyta</taxon>
        <taxon>Embryophyta</taxon>
        <taxon>Tracheophyta</taxon>
        <taxon>Spermatophyta</taxon>
        <taxon>Magnoliopsida</taxon>
        <taxon>Liliopsida</taxon>
        <taxon>Poales</taxon>
        <taxon>Poaceae</taxon>
        <taxon>BOP clade</taxon>
        <taxon>Pooideae</taxon>
        <taxon>Poodae</taxon>
        <taxon>Poeae</taxon>
        <taxon>Poeae Chloroplast Group 1 (Aveneae type)</taxon>
        <taxon>Agrostidodinae</taxon>
        <taxon>Agrostidinae</taxon>
        <taxon>Agrostis</taxon>
    </lineage>
</organism>
<keyword id="KW-0066">ATP synthesis</keyword>
<keyword id="KW-0139">CF(1)</keyword>
<keyword id="KW-0150">Chloroplast</keyword>
<keyword id="KW-0375">Hydrogen ion transport</keyword>
<keyword id="KW-0406">Ion transport</keyword>
<keyword id="KW-0472">Membrane</keyword>
<keyword id="KW-0934">Plastid</keyword>
<keyword id="KW-0793">Thylakoid</keyword>
<keyword id="KW-0813">Transport</keyword>
<gene>
    <name evidence="1" type="primary">atpE</name>
</gene>
<comment type="function">
    <text evidence="1">Produces ATP from ADP in the presence of a proton gradient across the membrane.</text>
</comment>
<comment type="subunit">
    <text evidence="1">F-type ATPases have 2 components, CF(1) - the catalytic core - and CF(0) - the membrane proton channel. CF(1) has five subunits: alpha(3), beta(3), gamma(1), delta(1), epsilon(1). CF(0) has three main subunits: a, b and c.</text>
</comment>
<comment type="subcellular location">
    <subcellularLocation>
        <location evidence="1">Plastid</location>
        <location evidence="1">Chloroplast thylakoid membrane</location>
        <topology evidence="1">Peripheral membrane protein</topology>
    </subcellularLocation>
</comment>
<comment type="similarity">
    <text evidence="1">Belongs to the ATPase epsilon chain family.</text>
</comment>
<accession>A1EA14</accession>
<protein>
    <recommendedName>
        <fullName evidence="1">ATP synthase epsilon chain, chloroplastic</fullName>
    </recommendedName>
    <alternativeName>
        <fullName evidence="1">ATP synthase F1 sector epsilon subunit</fullName>
    </alternativeName>
    <alternativeName>
        <fullName evidence="1">F-ATPase epsilon subunit</fullName>
    </alternativeName>
</protein>
<feature type="chain" id="PRO_0000275191" description="ATP synthase epsilon chain, chloroplastic">
    <location>
        <begin position="1"/>
        <end position="137"/>
    </location>
</feature>
<geneLocation type="chloroplast"/>
<dbReference type="EMBL" id="EF115543">
    <property type="protein sequence ID" value="ABK79586.1"/>
    <property type="molecule type" value="Genomic_DNA"/>
</dbReference>
<dbReference type="RefSeq" id="YP_874742.1">
    <property type="nucleotide sequence ID" value="NC_008591.1"/>
</dbReference>
<dbReference type="SMR" id="A1EA14"/>
<dbReference type="GeneID" id="4524984"/>
<dbReference type="GO" id="GO:0009535">
    <property type="term" value="C:chloroplast thylakoid membrane"/>
    <property type="evidence" value="ECO:0007669"/>
    <property type="project" value="UniProtKB-SubCell"/>
</dbReference>
<dbReference type="GO" id="GO:0045259">
    <property type="term" value="C:proton-transporting ATP synthase complex"/>
    <property type="evidence" value="ECO:0007669"/>
    <property type="project" value="UniProtKB-KW"/>
</dbReference>
<dbReference type="GO" id="GO:0005524">
    <property type="term" value="F:ATP binding"/>
    <property type="evidence" value="ECO:0007669"/>
    <property type="project" value="UniProtKB-UniRule"/>
</dbReference>
<dbReference type="GO" id="GO:0046933">
    <property type="term" value="F:proton-transporting ATP synthase activity, rotational mechanism"/>
    <property type="evidence" value="ECO:0007669"/>
    <property type="project" value="UniProtKB-UniRule"/>
</dbReference>
<dbReference type="CDD" id="cd12152">
    <property type="entry name" value="F1-ATPase_delta"/>
    <property type="match status" value="1"/>
</dbReference>
<dbReference type="FunFam" id="2.60.15.10:FF:000002">
    <property type="entry name" value="ATP synthase epsilon chain, chloroplastic"/>
    <property type="match status" value="1"/>
</dbReference>
<dbReference type="Gene3D" id="6.10.140.480">
    <property type="match status" value="1"/>
</dbReference>
<dbReference type="Gene3D" id="2.60.15.10">
    <property type="entry name" value="F0F1 ATP synthase delta/epsilon subunit, N-terminal"/>
    <property type="match status" value="1"/>
</dbReference>
<dbReference type="HAMAP" id="MF_00530">
    <property type="entry name" value="ATP_synth_epsil_bac"/>
    <property type="match status" value="1"/>
</dbReference>
<dbReference type="InterPro" id="IPR001469">
    <property type="entry name" value="ATP_synth_F1_dsu/esu"/>
</dbReference>
<dbReference type="InterPro" id="IPR020546">
    <property type="entry name" value="ATP_synth_F1_dsu/esu_N"/>
</dbReference>
<dbReference type="InterPro" id="IPR020547">
    <property type="entry name" value="ATP_synth_F1_esu_C"/>
</dbReference>
<dbReference type="InterPro" id="IPR036771">
    <property type="entry name" value="ATPsynth_dsu/esu_N"/>
</dbReference>
<dbReference type="NCBIfam" id="TIGR01216">
    <property type="entry name" value="ATP_synt_epsi"/>
    <property type="match status" value="1"/>
</dbReference>
<dbReference type="PANTHER" id="PTHR13822">
    <property type="entry name" value="ATP SYNTHASE DELTA/EPSILON CHAIN"/>
    <property type="match status" value="1"/>
</dbReference>
<dbReference type="PANTHER" id="PTHR13822:SF10">
    <property type="entry name" value="ATP SYNTHASE EPSILON CHAIN, CHLOROPLASTIC"/>
    <property type="match status" value="1"/>
</dbReference>
<dbReference type="Pfam" id="PF00401">
    <property type="entry name" value="ATP-synt_DE"/>
    <property type="match status" value="1"/>
</dbReference>
<dbReference type="Pfam" id="PF02823">
    <property type="entry name" value="ATP-synt_DE_N"/>
    <property type="match status" value="1"/>
</dbReference>
<dbReference type="SUPFAM" id="SSF51344">
    <property type="entry name" value="Epsilon subunit of F1F0-ATP synthase N-terminal domain"/>
    <property type="match status" value="1"/>
</dbReference>